<protein>
    <recommendedName>
        <fullName evidence="1">Histidine--tRNA ligase</fullName>
        <ecNumber evidence="1">6.1.1.21</ecNumber>
    </recommendedName>
    <alternativeName>
        <fullName evidence="1">Histidyl-tRNA synthetase</fullName>
        <shortName evidence="1">HisRS</shortName>
    </alternativeName>
</protein>
<organism>
    <name type="scientific">Oleidesulfovibrio alaskensis (strain ATCC BAA-1058 / DSM 17464 / G20)</name>
    <name type="common">Desulfovibrio alaskensis</name>
    <dbReference type="NCBI Taxonomy" id="207559"/>
    <lineage>
        <taxon>Bacteria</taxon>
        <taxon>Pseudomonadati</taxon>
        <taxon>Thermodesulfobacteriota</taxon>
        <taxon>Desulfovibrionia</taxon>
        <taxon>Desulfovibrionales</taxon>
        <taxon>Desulfovibrionaceae</taxon>
        <taxon>Oleidesulfovibrio</taxon>
    </lineage>
</organism>
<keyword id="KW-0030">Aminoacyl-tRNA synthetase</keyword>
<keyword id="KW-0067">ATP-binding</keyword>
<keyword id="KW-0963">Cytoplasm</keyword>
<keyword id="KW-0436">Ligase</keyword>
<keyword id="KW-0547">Nucleotide-binding</keyword>
<keyword id="KW-0648">Protein biosynthesis</keyword>
<keyword id="KW-1185">Reference proteome</keyword>
<dbReference type="EC" id="6.1.1.21" evidence="1"/>
<dbReference type="EMBL" id="CP000112">
    <property type="protein sequence ID" value="ABB36812.1"/>
    <property type="molecule type" value="Genomic_DNA"/>
</dbReference>
<dbReference type="RefSeq" id="WP_011366211.1">
    <property type="nucleotide sequence ID" value="NC_007519.1"/>
</dbReference>
<dbReference type="SMR" id="Q317R4"/>
<dbReference type="STRING" id="207559.Dde_0011"/>
<dbReference type="KEGG" id="dde:Dde_0011"/>
<dbReference type="eggNOG" id="COG0124">
    <property type="taxonomic scope" value="Bacteria"/>
</dbReference>
<dbReference type="HOGENOM" id="CLU_025113_1_1_7"/>
<dbReference type="Proteomes" id="UP000002710">
    <property type="component" value="Chromosome"/>
</dbReference>
<dbReference type="GO" id="GO:0005737">
    <property type="term" value="C:cytoplasm"/>
    <property type="evidence" value="ECO:0007669"/>
    <property type="project" value="UniProtKB-SubCell"/>
</dbReference>
<dbReference type="GO" id="GO:0005524">
    <property type="term" value="F:ATP binding"/>
    <property type="evidence" value="ECO:0007669"/>
    <property type="project" value="UniProtKB-UniRule"/>
</dbReference>
<dbReference type="GO" id="GO:0004821">
    <property type="term" value="F:histidine-tRNA ligase activity"/>
    <property type="evidence" value="ECO:0007669"/>
    <property type="project" value="UniProtKB-UniRule"/>
</dbReference>
<dbReference type="GO" id="GO:0006427">
    <property type="term" value="P:histidyl-tRNA aminoacylation"/>
    <property type="evidence" value="ECO:0007669"/>
    <property type="project" value="UniProtKB-UniRule"/>
</dbReference>
<dbReference type="CDD" id="cd00773">
    <property type="entry name" value="HisRS-like_core"/>
    <property type="match status" value="1"/>
</dbReference>
<dbReference type="CDD" id="cd00859">
    <property type="entry name" value="HisRS_anticodon"/>
    <property type="match status" value="1"/>
</dbReference>
<dbReference type="Gene3D" id="3.40.50.800">
    <property type="entry name" value="Anticodon-binding domain"/>
    <property type="match status" value="1"/>
</dbReference>
<dbReference type="Gene3D" id="3.30.930.10">
    <property type="entry name" value="Bira Bifunctional Protein, Domain 2"/>
    <property type="match status" value="1"/>
</dbReference>
<dbReference type="HAMAP" id="MF_00127">
    <property type="entry name" value="His_tRNA_synth"/>
    <property type="match status" value="1"/>
</dbReference>
<dbReference type="InterPro" id="IPR006195">
    <property type="entry name" value="aa-tRNA-synth_II"/>
</dbReference>
<dbReference type="InterPro" id="IPR045864">
    <property type="entry name" value="aa-tRNA-synth_II/BPL/LPL"/>
</dbReference>
<dbReference type="InterPro" id="IPR004154">
    <property type="entry name" value="Anticodon-bd"/>
</dbReference>
<dbReference type="InterPro" id="IPR036621">
    <property type="entry name" value="Anticodon-bd_dom_sf"/>
</dbReference>
<dbReference type="InterPro" id="IPR015807">
    <property type="entry name" value="His-tRNA-ligase"/>
</dbReference>
<dbReference type="InterPro" id="IPR041715">
    <property type="entry name" value="HisRS-like_core"/>
</dbReference>
<dbReference type="InterPro" id="IPR004516">
    <property type="entry name" value="HisRS/HisZ"/>
</dbReference>
<dbReference type="InterPro" id="IPR033656">
    <property type="entry name" value="HisRS_anticodon"/>
</dbReference>
<dbReference type="NCBIfam" id="TIGR00442">
    <property type="entry name" value="hisS"/>
    <property type="match status" value="1"/>
</dbReference>
<dbReference type="PANTHER" id="PTHR43707:SF1">
    <property type="entry name" value="HISTIDINE--TRNA LIGASE, MITOCHONDRIAL-RELATED"/>
    <property type="match status" value="1"/>
</dbReference>
<dbReference type="PANTHER" id="PTHR43707">
    <property type="entry name" value="HISTIDYL-TRNA SYNTHETASE"/>
    <property type="match status" value="1"/>
</dbReference>
<dbReference type="Pfam" id="PF03129">
    <property type="entry name" value="HGTP_anticodon"/>
    <property type="match status" value="1"/>
</dbReference>
<dbReference type="Pfam" id="PF13393">
    <property type="entry name" value="tRNA-synt_His"/>
    <property type="match status" value="1"/>
</dbReference>
<dbReference type="PIRSF" id="PIRSF001549">
    <property type="entry name" value="His-tRNA_synth"/>
    <property type="match status" value="1"/>
</dbReference>
<dbReference type="SUPFAM" id="SSF52954">
    <property type="entry name" value="Class II aaRS ABD-related"/>
    <property type="match status" value="1"/>
</dbReference>
<dbReference type="SUPFAM" id="SSF55681">
    <property type="entry name" value="Class II aaRS and biotin synthetases"/>
    <property type="match status" value="1"/>
</dbReference>
<dbReference type="PROSITE" id="PS50862">
    <property type="entry name" value="AA_TRNA_LIGASE_II"/>
    <property type="match status" value="1"/>
</dbReference>
<feature type="chain" id="PRO_1000016352" description="Histidine--tRNA ligase">
    <location>
        <begin position="1"/>
        <end position="417"/>
    </location>
</feature>
<comment type="catalytic activity">
    <reaction evidence="1">
        <text>tRNA(His) + L-histidine + ATP = L-histidyl-tRNA(His) + AMP + diphosphate + H(+)</text>
        <dbReference type="Rhea" id="RHEA:17313"/>
        <dbReference type="Rhea" id="RHEA-COMP:9665"/>
        <dbReference type="Rhea" id="RHEA-COMP:9689"/>
        <dbReference type="ChEBI" id="CHEBI:15378"/>
        <dbReference type="ChEBI" id="CHEBI:30616"/>
        <dbReference type="ChEBI" id="CHEBI:33019"/>
        <dbReference type="ChEBI" id="CHEBI:57595"/>
        <dbReference type="ChEBI" id="CHEBI:78442"/>
        <dbReference type="ChEBI" id="CHEBI:78527"/>
        <dbReference type="ChEBI" id="CHEBI:456215"/>
        <dbReference type="EC" id="6.1.1.21"/>
    </reaction>
</comment>
<comment type="subunit">
    <text evidence="1">Homodimer.</text>
</comment>
<comment type="subcellular location">
    <subcellularLocation>
        <location evidence="1">Cytoplasm</location>
    </subcellularLocation>
</comment>
<comment type="similarity">
    <text evidence="1">Belongs to the class-II aminoacyl-tRNA synthetase family.</text>
</comment>
<reference key="1">
    <citation type="journal article" date="2011" name="J. Bacteriol.">
        <title>Complete genome sequence and updated annotation of Desulfovibrio alaskensis G20.</title>
        <authorList>
            <person name="Hauser L.J."/>
            <person name="Land M.L."/>
            <person name="Brown S.D."/>
            <person name="Larimer F."/>
            <person name="Keller K.L."/>
            <person name="Rapp-Giles B.J."/>
            <person name="Price M.N."/>
            <person name="Lin M."/>
            <person name="Bruce D.C."/>
            <person name="Detter J.C."/>
            <person name="Tapia R."/>
            <person name="Han C.S."/>
            <person name="Goodwin L.A."/>
            <person name="Cheng J.F."/>
            <person name="Pitluck S."/>
            <person name="Copeland A."/>
            <person name="Lucas S."/>
            <person name="Nolan M."/>
            <person name="Lapidus A.L."/>
            <person name="Palumbo A.V."/>
            <person name="Wall J.D."/>
        </authorList>
    </citation>
    <scope>NUCLEOTIDE SEQUENCE [LARGE SCALE GENOMIC DNA]</scope>
    <source>
        <strain>ATCC BAA-1058 / DSM 17464 / G20</strain>
    </source>
</reference>
<sequence length="417" mass="46139">MSNVKKIKGFADLFSPESDVFTFMENTARDVFSSYGYGELRTPILERTELFCRSIGTETDVVQKEMYTFPDRKNRSLTMRPEATAGVMRAYIEGSLHSQEQVSKLFTFGPMFRYERPQKGRMRQFHQINCECLGPQEPYADAEIILMLLMFLKRIGLSGLELQINSLGCRECRPQYHAALRAFLASLDTAELCEDCRRRMETNPLRVLDCKVPRCKELTADAPVILDHTCDACSEHHSVVLGMLERAGVVYTANPRLVRGLDYYNRTTFEVVCGEIGAQSSVAGGGRYDGLVSQLGGPDVPGIGFACGMERLALALEQKAQREVPRPDFLVAVLEQDGLERGMMLAEALRESGLKGEVSFAARSMKSQMRQAGKRNVRKVLLLGGSEIADGTVTVKDMDTGGQTTISLDAAPGAVAD</sequence>
<proteinExistence type="inferred from homology"/>
<gene>
    <name evidence="1" type="primary">hisS</name>
    <name type="ordered locus">Dde_0011</name>
</gene>
<evidence type="ECO:0000255" key="1">
    <source>
        <dbReference type="HAMAP-Rule" id="MF_00127"/>
    </source>
</evidence>
<name>SYH_OLEA2</name>
<accession>Q317R4</accession>